<accession>Q80W90</accession>
<accession>A1A5M2</accession>
<accession>Q811Z4</accession>
<feature type="chain" id="PRO_0000364228" description="LIM/homeobox protein Lhx9">
    <location>
        <begin position="1"/>
        <end position="388"/>
    </location>
</feature>
<feature type="domain" description="LIM zinc-binding 1" evidence="3">
    <location>
        <begin position="69"/>
        <end position="130"/>
    </location>
</feature>
<feature type="domain" description="LIM zinc-binding 2" evidence="3">
    <location>
        <begin position="131"/>
        <end position="193"/>
    </location>
</feature>
<feature type="DNA-binding region" description="Homeobox" evidence="2">
    <location>
        <begin position="267"/>
        <end position="326"/>
    </location>
</feature>
<feature type="region of interest" description="Disordered" evidence="4">
    <location>
        <begin position="239"/>
        <end position="263"/>
    </location>
</feature>
<feature type="region of interest" description="Disordered" evidence="4">
    <location>
        <begin position="321"/>
        <end position="356"/>
    </location>
</feature>
<feature type="region of interest" description="Disordered" evidence="4">
    <location>
        <begin position="369"/>
        <end position="388"/>
    </location>
</feature>
<feature type="compositionally biased region" description="Low complexity" evidence="4">
    <location>
        <begin position="344"/>
        <end position="356"/>
    </location>
</feature>
<feature type="compositionally biased region" description="Polar residues" evidence="4">
    <location>
        <begin position="376"/>
        <end position="388"/>
    </location>
</feature>
<feature type="splice variant" id="VSP_036432" description="In isoform 2." evidence="6">
    <original>VWFQNARAKFRRNLLRQENGGVDKADGTSLPAPPSADSGALTPPGTATTLTDLTNPTVTVVTTVTSNMDSHESGSPSQTTLTNLF</original>
    <variation>GEQILGHYSQTSRRLKIP</variation>
    <location>
        <begin position="304"/>
        <end position="388"/>
    </location>
</feature>
<dbReference type="EMBL" id="AY273890">
    <property type="protein sequence ID" value="AAP32472.1"/>
    <property type="molecule type" value="mRNA"/>
</dbReference>
<dbReference type="EMBL" id="BC128722">
    <property type="protein sequence ID" value="AAI28723.1"/>
    <property type="molecule type" value="mRNA"/>
</dbReference>
<dbReference type="EMBL" id="AF527619">
    <property type="protein sequence ID" value="AAO27570.1"/>
    <property type="molecule type" value="mRNA"/>
</dbReference>
<dbReference type="RefSeq" id="NP_852032.1">
    <molecule id="Q80W90-1"/>
    <property type="nucleotide sequence ID" value="NM_181367.2"/>
</dbReference>
<dbReference type="RefSeq" id="XP_006249978.1">
    <property type="nucleotide sequence ID" value="XM_006249916.2"/>
</dbReference>
<dbReference type="RefSeq" id="XP_006249981.1">
    <molecule id="Q80W90-2"/>
    <property type="nucleotide sequence ID" value="XM_006249919.5"/>
</dbReference>
<dbReference type="SMR" id="Q80W90"/>
<dbReference type="FunCoup" id="Q80W90">
    <property type="interactions" value="1230"/>
</dbReference>
<dbReference type="STRING" id="10116.ENSRNOP00000014218"/>
<dbReference type="PhosphoSitePlus" id="Q80W90"/>
<dbReference type="PaxDb" id="10116-ENSRNOP00000013873"/>
<dbReference type="Ensembl" id="ENSRNOT00000014218.7">
    <molecule id="Q80W90-2"/>
    <property type="protein sequence ID" value="ENSRNOP00000014218.6"/>
    <property type="gene ID" value="ENSRNOG00000010357.9"/>
</dbReference>
<dbReference type="Ensembl" id="ENSRNOT00000101843.1">
    <molecule id="Q80W90-1"/>
    <property type="protein sequence ID" value="ENSRNOP00000092128.1"/>
    <property type="gene ID" value="ENSRNOG00000010357.9"/>
</dbReference>
<dbReference type="GeneID" id="289048"/>
<dbReference type="KEGG" id="rno:289048"/>
<dbReference type="UCSC" id="RGD:727956">
    <molecule id="Q80W90-1"/>
    <property type="organism name" value="rat"/>
</dbReference>
<dbReference type="AGR" id="RGD:727956"/>
<dbReference type="CTD" id="56956"/>
<dbReference type="RGD" id="727956">
    <property type="gene designation" value="Lhx9"/>
</dbReference>
<dbReference type="eggNOG" id="KOG0490">
    <property type="taxonomic scope" value="Eukaryota"/>
</dbReference>
<dbReference type="GeneTree" id="ENSGT00940000158821"/>
<dbReference type="HOGENOM" id="CLU_027802_4_1_1"/>
<dbReference type="InParanoid" id="Q80W90"/>
<dbReference type="OMA" id="LICCECK"/>
<dbReference type="PhylomeDB" id="Q80W90"/>
<dbReference type="TreeFam" id="TF315442"/>
<dbReference type="PRO" id="PR:Q80W90"/>
<dbReference type="Proteomes" id="UP000002494">
    <property type="component" value="Chromosome 13"/>
</dbReference>
<dbReference type="Bgee" id="ENSRNOG00000010357">
    <property type="expression patterns" value="Expressed in ovary and 2 other cell types or tissues"/>
</dbReference>
<dbReference type="GO" id="GO:0005634">
    <property type="term" value="C:nucleus"/>
    <property type="evidence" value="ECO:0000318"/>
    <property type="project" value="GO_Central"/>
</dbReference>
<dbReference type="GO" id="GO:0000981">
    <property type="term" value="F:DNA-binding transcription factor activity, RNA polymerase II-specific"/>
    <property type="evidence" value="ECO:0000318"/>
    <property type="project" value="GO_Central"/>
</dbReference>
<dbReference type="GO" id="GO:0046872">
    <property type="term" value="F:metal ion binding"/>
    <property type="evidence" value="ECO:0007669"/>
    <property type="project" value="UniProtKB-KW"/>
</dbReference>
<dbReference type="GO" id="GO:0000977">
    <property type="term" value="F:RNA polymerase II transcription regulatory region sequence-specific DNA binding"/>
    <property type="evidence" value="ECO:0000318"/>
    <property type="project" value="GO_Central"/>
</dbReference>
<dbReference type="GO" id="GO:1990837">
    <property type="term" value="F:sequence-specific double-stranded DNA binding"/>
    <property type="evidence" value="ECO:0000266"/>
    <property type="project" value="RGD"/>
</dbReference>
<dbReference type="GO" id="GO:0008283">
    <property type="term" value="P:cell population proliferation"/>
    <property type="evidence" value="ECO:0000266"/>
    <property type="project" value="RGD"/>
</dbReference>
<dbReference type="GO" id="GO:0097380">
    <property type="term" value="P:dorsal spinal cord interneuron anterior axon guidance"/>
    <property type="evidence" value="ECO:0000250"/>
    <property type="project" value="UniProtKB"/>
</dbReference>
<dbReference type="GO" id="GO:0008585">
    <property type="term" value="P:female gonad development"/>
    <property type="evidence" value="ECO:0000266"/>
    <property type="project" value="RGD"/>
</dbReference>
<dbReference type="GO" id="GO:0035262">
    <property type="term" value="P:gonad morphogenesis"/>
    <property type="evidence" value="ECO:0000266"/>
    <property type="project" value="RGD"/>
</dbReference>
<dbReference type="GO" id="GO:0008584">
    <property type="term" value="P:male gonad development"/>
    <property type="evidence" value="ECO:0000266"/>
    <property type="project" value="RGD"/>
</dbReference>
<dbReference type="GO" id="GO:0045892">
    <property type="term" value="P:negative regulation of DNA-templated transcription"/>
    <property type="evidence" value="ECO:0000250"/>
    <property type="project" value="UniProtKB"/>
</dbReference>
<dbReference type="GO" id="GO:0030182">
    <property type="term" value="P:neuron differentiation"/>
    <property type="evidence" value="ECO:0000318"/>
    <property type="project" value="GO_Central"/>
</dbReference>
<dbReference type="GO" id="GO:0006357">
    <property type="term" value="P:regulation of transcription by RNA polymerase II"/>
    <property type="evidence" value="ECO:0000318"/>
    <property type="project" value="GO_Central"/>
</dbReference>
<dbReference type="CDD" id="cd00086">
    <property type="entry name" value="homeodomain"/>
    <property type="match status" value="1"/>
</dbReference>
<dbReference type="CDD" id="cd09469">
    <property type="entry name" value="LIM1_Lhx2"/>
    <property type="match status" value="1"/>
</dbReference>
<dbReference type="CDD" id="cd09377">
    <property type="entry name" value="LIM2_Lhx2_Lhx9"/>
    <property type="match status" value="1"/>
</dbReference>
<dbReference type="FunFam" id="1.10.10.60:FF:000027">
    <property type="entry name" value="LIM/homeobox protein Lhx9"/>
    <property type="match status" value="1"/>
</dbReference>
<dbReference type="FunFam" id="2.10.110.10:FF:000039">
    <property type="entry name" value="LIM/homeobox protein Lhx9 isoform 2"/>
    <property type="match status" value="1"/>
</dbReference>
<dbReference type="FunFam" id="2.10.110.10:FF:000033">
    <property type="entry name" value="LIM/homeobox protein Lhx9 isoform X2"/>
    <property type="match status" value="1"/>
</dbReference>
<dbReference type="Gene3D" id="2.10.110.10">
    <property type="entry name" value="Cysteine Rich Protein"/>
    <property type="match status" value="2"/>
</dbReference>
<dbReference type="Gene3D" id="1.10.10.60">
    <property type="entry name" value="Homeodomain-like"/>
    <property type="match status" value="1"/>
</dbReference>
<dbReference type="InterPro" id="IPR001356">
    <property type="entry name" value="HD"/>
</dbReference>
<dbReference type="InterPro" id="IPR017970">
    <property type="entry name" value="Homeobox_CS"/>
</dbReference>
<dbReference type="InterPro" id="IPR009057">
    <property type="entry name" value="Homeodomain-like_sf"/>
</dbReference>
<dbReference type="InterPro" id="IPR050453">
    <property type="entry name" value="LIM_Homeobox_TF"/>
</dbReference>
<dbReference type="InterPro" id="IPR001781">
    <property type="entry name" value="Znf_LIM"/>
</dbReference>
<dbReference type="PANTHER" id="PTHR24208">
    <property type="entry name" value="LIM/HOMEOBOX PROTEIN LHX"/>
    <property type="match status" value="1"/>
</dbReference>
<dbReference type="PANTHER" id="PTHR24208:SF95">
    <property type="entry name" value="LIM_HOMEOBOX PROTEIN LHX9"/>
    <property type="match status" value="1"/>
</dbReference>
<dbReference type="Pfam" id="PF00046">
    <property type="entry name" value="Homeodomain"/>
    <property type="match status" value="1"/>
</dbReference>
<dbReference type="Pfam" id="PF00412">
    <property type="entry name" value="LIM"/>
    <property type="match status" value="2"/>
</dbReference>
<dbReference type="SMART" id="SM00389">
    <property type="entry name" value="HOX"/>
    <property type="match status" value="1"/>
</dbReference>
<dbReference type="SMART" id="SM00132">
    <property type="entry name" value="LIM"/>
    <property type="match status" value="2"/>
</dbReference>
<dbReference type="SUPFAM" id="SSF57716">
    <property type="entry name" value="Glucocorticoid receptor-like (DNA-binding domain)"/>
    <property type="match status" value="2"/>
</dbReference>
<dbReference type="SUPFAM" id="SSF46689">
    <property type="entry name" value="Homeodomain-like"/>
    <property type="match status" value="1"/>
</dbReference>
<dbReference type="PROSITE" id="PS00027">
    <property type="entry name" value="HOMEOBOX_1"/>
    <property type="match status" value="1"/>
</dbReference>
<dbReference type="PROSITE" id="PS50071">
    <property type="entry name" value="HOMEOBOX_2"/>
    <property type="match status" value="1"/>
</dbReference>
<dbReference type="PROSITE" id="PS00478">
    <property type="entry name" value="LIM_DOMAIN_1"/>
    <property type="match status" value="2"/>
</dbReference>
<dbReference type="PROSITE" id="PS50023">
    <property type="entry name" value="LIM_DOMAIN_2"/>
    <property type="match status" value="2"/>
</dbReference>
<keyword id="KW-0025">Alternative splicing</keyword>
<keyword id="KW-0238">DNA-binding</keyword>
<keyword id="KW-0371">Homeobox</keyword>
<keyword id="KW-0440">LIM domain</keyword>
<keyword id="KW-0479">Metal-binding</keyword>
<keyword id="KW-0539">Nucleus</keyword>
<keyword id="KW-1185">Reference proteome</keyword>
<keyword id="KW-0677">Repeat</keyword>
<keyword id="KW-0862">Zinc</keyword>
<gene>
    <name type="primary">Lhx9</name>
</gene>
<sequence>MLNGTTLEAAMLFHGISGGHIQGIMEEMERRSKTEARLAKGTQLNGRDAGMPPLSPEKPALCAGCGGKISDRYYLLAVDKQWHLRCLKCCECKLALESELTCFAKDGSIYCKEDYYRRFSVQRCARCHLGISASEMVMRARDSVYHLSCFTCSTCNKTLTTGDHFGMKDSLVYCRAHFETLLQGEYPPQLSYTELAAKSGGLALPYFNGTGTVQKGRPRKRKSPALGVDIVNYNSGCNENEADHLDRDQQPYPPSQKTKRMRTSFKHHQLRTMKSYFAINHNPDAKDLKQLAQKTGLTKRVLQVWFQNARAKFRRNLLRQENGGVDKADGTSLPAPPSADSGALTPPGTATTLTDLTNPTVTVVTTVTSNMDSHESGSPSQTTLTNLF</sequence>
<proteinExistence type="evidence at transcript level"/>
<protein>
    <recommendedName>
        <fullName>LIM/homeobox protein Lhx9</fullName>
        <shortName>LIM homeobox protein 9</shortName>
    </recommendedName>
</protein>
<evidence type="ECO:0000250" key="1"/>
<evidence type="ECO:0000255" key="2">
    <source>
        <dbReference type="PROSITE-ProRule" id="PRU00108"/>
    </source>
</evidence>
<evidence type="ECO:0000255" key="3">
    <source>
        <dbReference type="PROSITE-ProRule" id="PRU00125"/>
    </source>
</evidence>
<evidence type="ECO:0000256" key="4">
    <source>
        <dbReference type="SAM" id="MobiDB-lite"/>
    </source>
</evidence>
<evidence type="ECO:0000269" key="5">
    <source>
    </source>
</evidence>
<evidence type="ECO:0000303" key="6">
    <source>
    </source>
</evidence>
<reference key="1">
    <citation type="submission" date="2003-04" db="EMBL/GenBank/DDBJ databases">
        <title>Cloning and characterization of Rat LIM-homeodomain type transcription factor Lhx9.</title>
        <authorList>
            <person name="Shan Y.X."/>
            <person name="Pan J."/>
            <person name="Geng D.C."/>
            <person name="Gu M.Y."/>
            <person name="Yu L."/>
        </authorList>
    </citation>
    <scope>NUCLEOTIDE SEQUENCE [MRNA] (ISOFORM 1)</scope>
</reference>
<reference key="2">
    <citation type="journal article" date="2004" name="Genome Res.">
        <title>The status, quality, and expansion of the NIH full-length cDNA project: the Mammalian Gene Collection (MGC).</title>
        <authorList>
            <consortium name="The MGC Project Team"/>
        </authorList>
    </citation>
    <scope>NUCLEOTIDE SEQUENCE [LARGE SCALE MRNA] (ISOFORM 2)</scope>
    <source>
        <tissue>Brain</tissue>
    </source>
</reference>
<reference key="3">
    <citation type="journal article" date="2002" name="Gene Expr. Patterns">
        <title>Lhx9 expression during gonadal morphogenesis as related to the state of cell differentiation.</title>
        <authorList>
            <person name="Mazaud S."/>
            <person name="Oreal E."/>
            <person name="Guigon C.J."/>
            <person name="Carre-Eusebe D."/>
            <person name="Magre S."/>
        </authorList>
    </citation>
    <scope>NUCLEOTIDE SEQUENCE [MRNA] OF 23-347 (ISOFORM 1)</scope>
    <scope>DEVELOPMENTAL STAGE</scope>
    <source>
        <strain>Wistar</strain>
    </source>
</reference>
<name>LHX9_RAT</name>
<comment type="function">
    <text evidence="1">Involved in gonadal development.</text>
</comment>
<comment type="subunit">
    <text evidence="1">Interacts with LDB1 and LDB2.</text>
</comment>
<comment type="subcellular location">
    <subcellularLocation>
        <location evidence="2">Nucleus</location>
    </subcellularLocation>
</comment>
<comment type="alternative products">
    <event type="alternative splicing"/>
    <isoform>
        <id>Q80W90-1</id>
        <name>1</name>
        <sequence type="displayed"/>
    </isoform>
    <isoform>
        <id>Q80W90-2</id>
        <name>2</name>
        <sequence type="described" ref="VSP_036432"/>
    </isoform>
</comment>
<comment type="developmental stage">
    <text evidence="5">Expressed in the proliferating cells of the coelomic epithelium of male and female gonads at 12 dpc. In female, expressed in the whole gonadal primordium at 13.5 dpc; in the surface epithelium and in the ovigerous cords at 15.5 dpc. In male, expressed at surface cells of the gonads at 13.5 dpc; in mesenchymal cells outside testicular cords at 18.5 dpc.</text>
</comment>
<organism>
    <name type="scientific">Rattus norvegicus</name>
    <name type="common">Rat</name>
    <dbReference type="NCBI Taxonomy" id="10116"/>
    <lineage>
        <taxon>Eukaryota</taxon>
        <taxon>Metazoa</taxon>
        <taxon>Chordata</taxon>
        <taxon>Craniata</taxon>
        <taxon>Vertebrata</taxon>
        <taxon>Euteleostomi</taxon>
        <taxon>Mammalia</taxon>
        <taxon>Eutheria</taxon>
        <taxon>Euarchontoglires</taxon>
        <taxon>Glires</taxon>
        <taxon>Rodentia</taxon>
        <taxon>Myomorpha</taxon>
        <taxon>Muroidea</taxon>
        <taxon>Muridae</taxon>
        <taxon>Murinae</taxon>
        <taxon>Rattus</taxon>
    </lineage>
</organism>